<comment type="function">
    <text evidence="6">Secreted aspartic endopeptidase that allows assimilation of proteinaceous substrates. The scissile peptide bond is attacked by a nucleophilic water molecule activated by two aspartic residues in the active site. Shows a broad primary substrate specificity. Favors hydrophobic residues at the P1 and P1' positions, but can also activate trypsinogen and hydrolyze the B chain of insulin between positions 'Gly-20' and 'Glu-21'.</text>
</comment>
<comment type="catalytic activity">
    <reaction evidence="6">
        <text>Hydrolysis of proteins with broad specificity similar to that of pepsin A, preferring hydrophobic residues at P1 and P1', but also cleaving 20-Gly-|-Glu-21 in the B chain of insulin. Clots milk, and activates trypsinogen.</text>
        <dbReference type="EC" id="3.4.23.20"/>
    </reaction>
</comment>
<comment type="biophysicochemical properties">
    <kinetics>
        <KM evidence="6">0.4 mM for Ac-Lys-p-nitrophenylalanyl-amide</KM>
        <KM evidence="6">0.4 mM for Ac-Ala-Lys-p-nitrophenylalanyl-amide</KM>
        <KM evidence="6">0.5 mM for Ac-Ala-Ala-Lys-p-nitrophenylalanyl-amide</KM>
        <KM evidence="6">0.59 mM for Ac-Lys-p-nitrophenylalanyl-Ala-amide</KM>
        <KM evidence="6">0.5 mM for Ac-Ala-Lys-p-nitrophenylalanyl-Ala-amide</KM>
        <KM evidence="6">0.35 mM for Ac-Ala-Ala-Lys-p-nitrophenylalanyl-Ala-amide</KM>
        <KM evidence="6">0.21 mM for Ac-Lys-p-nitrophenylalanyl-Ala-Ala-amide</KM>
        <KM evidence="6">0.41 mM for Ac-Ala-Lys-p-nitrophenylalanyl-Ala-Ala-amide</KM>
        <KM evidence="6">0.32 mM for Ac-Ala-Ala-Lys-p-nitrophenylalanyl-Ala-Ala-amide</KM>
        <KM evidence="6">0.46 mM for Ac-Ala-Ala-Ala-Lys-p-nitrophenylalanyl-Ala-Ala-amide</KM>
    </kinetics>
</comment>
<comment type="subunit">
    <text evidence="2">Monomer.</text>
</comment>
<comment type="subcellular location">
    <subcellularLocation>
        <location evidence="1">Secreted</location>
    </subcellularLocation>
</comment>
<comment type="similarity">
    <text evidence="5">Belongs to the peptidase A1 family.</text>
</comment>
<comment type="caution">
    <text evidence="8">PubMed:10850809 has identified a second propeptide cleavage site after Lys-68 and both possible mature proteins were found in equal quantities in a heterologous expression system in Aspergillus awamori.</text>
</comment>
<keyword id="KW-0064">Aspartyl protease</keyword>
<keyword id="KW-0903">Direct protein sequencing</keyword>
<keyword id="KW-1015">Disulfide bond</keyword>
<keyword id="KW-0325">Glycoprotein</keyword>
<keyword id="KW-0378">Hydrolase</keyword>
<keyword id="KW-0645">Protease</keyword>
<keyword id="KW-0964">Secreted</keyword>
<keyword id="KW-0732">Signal</keyword>
<keyword id="KW-0865">Zymogen</keyword>
<reference key="1">
    <citation type="journal article" date="2000" name="Protein Sci.">
        <title>Penicillopepsin-JT2, a recombinant enzyme from Penicillium janthinellum and the contribution of a hydrogen bond in subsite S3 to k(cat).</title>
        <authorList>
            <person name="Cao Q.N."/>
            <person name="Stubbs M."/>
            <person name="Ngo K.Q."/>
            <person name="Ward M."/>
            <person name="Cunningham A."/>
            <person name="Pai E.F."/>
            <person name="Tu G.C."/>
            <person name="Hofmann T."/>
        </authorList>
    </citation>
    <scope>NUCLEOTIDE SEQUENCE [GENOMIC DNA]</scope>
    <scope>PROTEIN SEQUENCE OF N-TERMINUS</scope>
    <scope>FUNCTION</scope>
    <scope>CATALYTIC ACTIVITY</scope>
    <scope>BIOPHYSICOCHEMICAL PROPERTIES</scope>
    <scope>IDENTIFICATION BY MASS SPECTROMETRY</scope>
    <source>
        <strain>NRRL905</strain>
    </source>
</reference>
<sequence>MVVFSKITVVLAGLATVASAVPTGTSRKSTFTVNQKARPVAQAKAINLPGMYASALSKYGAAVPASVKAAAESGTAVTTPEANDVEYLTPVNVGGTTLNLDFDTGSADLWVFSSELSSSESTGHSLYKPSSNATKLAGYSWSITYGDQSSASGDVYKDFVVVGGVKASPQAVEAASQISQQFVNDKNNDGLLGLAFSSINTVKPKSQTTFFDTVKGQLDSPLFAVTLKHNAPGTYDFGFVDKNKYTGSLTYAQVDSSQGFWSFTADGYKIGSKSGGSIQGIADTGTTLLLLPDNVVSDYYGQVSGAQQDSSAGGYTVPCSAQLPDFTVTIGSYNAVVPGSLINYAPLQSGSSTCFGGIQSNSGLGFSIFGDIFLKSQYVVFDANGPRLGFAPQA</sequence>
<protein>
    <recommendedName>
        <fullName evidence="8">Penicillopepsin-2</fullName>
        <ecNumber evidence="6">3.4.23.20</ecNumber>
    </recommendedName>
    <alternativeName>
        <fullName>Aspartic protease pepA</fullName>
    </alternativeName>
    <alternativeName>
        <fullName evidence="7">Penicillopepsin-JT2</fullName>
    </alternativeName>
</protein>
<feature type="signal peptide" evidence="3">
    <location>
        <begin position="1"/>
        <end position="20"/>
    </location>
</feature>
<feature type="propeptide" id="PRO_0000407055" description="Activation peptide" evidence="6">
    <location>
        <begin position="21"/>
        <end position="71"/>
    </location>
</feature>
<feature type="chain" id="PRO_5000145200" description="Penicillopepsin-2">
    <location>
        <begin position="72"/>
        <end position="394"/>
    </location>
</feature>
<feature type="domain" description="Peptidase A1" evidence="5">
    <location>
        <begin position="87"/>
        <end position="391"/>
    </location>
</feature>
<feature type="active site" evidence="5">
    <location>
        <position position="103"/>
    </location>
</feature>
<feature type="active site" evidence="5">
    <location>
        <position position="283"/>
    </location>
</feature>
<feature type="glycosylation site" description="N-linked (GlcNAc...) asparagine" evidence="4">
    <location>
        <position position="132"/>
    </location>
</feature>
<feature type="disulfide bond" evidence="5">
    <location>
        <begin position="319"/>
        <end position="354"/>
    </location>
</feature>
<proteinExistence type="evidence at protein level"/>
<accession>P78735</accession>
<name>PEPA2_PENJA</name>
<evidence type="ECO:0000250" key="1">
    <source>
        <dbReference type="UniProtKB" id="Q01972"/>
    </source>
</evidence>
<evidence type="ECO:0000250" key="2">
    <source>
        <dbReference type="UniProtKB" id="Q12567"/>
    </source>
</evidence>
<evidence type="ECO:0000255" key="3"/>
<evidence type="ECO:0000255" key="4">
    <source>
        <dbReference type="PROSITE-ProRule" id="PRU00498"/>
    </source>
</evidence>
<evidence type="ECO:0000255" key="5">
    <source>
        <dbReference type="PROSITE-ProRule" id="PRU01103"/>
    </source>
</evidence>
<evidence type="ECO:0000269" key="6">
    <source>
    </source>
</evidence>
<evidence type="ECO:0000303" key="7">
    <source>
    </source>
</evidence>
<evidence type="ECO:0000305" key="8"/>
<organism>
    <name type="scientific">Penicillium janthinellum</name>
    <name type="common">Penicillium vitale</name>
    <dbReference type="NCBI Taxonomy" id="5079"/>
    <lineage>
        <taxon>Eukaryota</taxon>
        <taxon>Fungi</taxon>
        <taxon>Dikarya</taxon>
        <taxon>Ascomycota</taxon>
        <taxon>Pezizomycotina</taxon>
        <taxon>Eurotiomycetes</taxon>
        <taxon>Eurotiomycetidae</taxon>
        <taxon>Eurotiales</taxon>
        <taxon>Aspergillaceae</taxon>
        <taxon>Penicillium</taxon>
    </lineage>
</organism>
<dbReference type="EC" id="3.4.23.20" evidence="6"/>
<dbReference type="EMBL" id="U81483">
    <property type="protein sequence ID" value="AAB63942.1"/>
    <property type="molecule type" value="Genomic_DNA"/>
</dbReference>
<dbReference type="SMR" id="P78735"/>
<dbReference type="MEROPS" id="A01.026"/>
<dbReference type="GlyCosmos" id="P78735">
    <property type="glycosylation" value="1 site, No reported glycans"/>
</dbReference>
<dbReference type="BRENDA" id="3.4.23.20">
    <property type="organism ID" value="4621"/>
</dbReference>
<dbReference type="SABIO-RK" id="P78735"/>
<dbReference type="GO" id="GO:0005576">
    <property type="term" value="C:extracellular region"/>
    <property type="evidence" value="ECO:0000314"/>
    <property type="project" value="UniProtKB"/>
</dbReference>
<dbReference type="GO" id="GO:0004190">
    <property type="term" value="F:aspartic-type endopeptidase activity"/>
    <property type="evidence" value="ECO:0000314"/>
    <property type="project" value="UniProtKB"/>
</dbReference>
<dbReference type="GO" id="GO:0006508">
    <property type="term" value="P:proteolysis"/>
    <property type="evidence" value="ECO:0007669"/>
    <property type="project" value="UniProtKB-KW"/>
</dbReference>
<dbReference type="CDD" id="cd06097">
    <property type="entry name" value="Aspergillopepsin_like"/>
    <property type="match status" value="1"/>
</dbReference>
<dbReference type="FunFam" id="2.40.70.10:FF:000024">
    <property type="entry name" value="Endothiapepsin"/>
    <property type="match status" value="1"/>
</dbReference>
<dbReference type="FunFam" id="2.40.70.10:FF:000026">
    <property type="entry name" value="Endothiapepsin"/>
    <property type="match status" value="1"/>
</dbReference>
<dbReference type="Gene3D" id="2.40.70.10">
    <property type="entry name" value="Acid Proteases"/>
    <property type="match status" value="2"/>
</dbReference>
<dbReference type="InterPro" id="IPR001461">
    <property type="entry name" value="Aspartic_peptidase_A1"/>
</dbReference>
<dbReference type="InterPro" id="IPR001969">
    <property type="entry name" value="Aspartic_peptidase_AS"/>
</dbReference>
<dbReference type="InterPro" id="IPR034163">
    <property type="entry name" value="Aspergillopepsin-like_cat_dom"/>
</dbReference>
<dbReference type="InterPro" id="IPR033121">
    <property type="entry name" value="PEPTIDASE_A1"/>
</dbReference>
<dbReference type="InterPro" id="IPR021109">
    <property type="entry name" value="Peptidase_aspartic_dom_sf"/>
</dbReference>
<dbReference type="PANTHER" id="PTHR47966:SF2">
    <property type="entry name" value="ASPERGILLOPEPSIN-1-RELATED"/>
    <property type="match status" value="1"/>
</dbReference>
<dbReference type="PANTHER" id="PTHR47966">
    <property type="entry name" value="BETA-SITE APP-CLEAVING ENZYME, ISOFORM A-RELATED"/>
    <property type="match status" value="1"/>
</dbReference>
<dbReference type="Pfam" id="PF00026">
    <property type="entry name" value="Asp"/>
    <property type="match status" value="1"/>
</dbReference>
<dbReference type="PRINTS" id="PR00792">
    <property type="entry name" value="PEPSIN"/>
</dbReference>
<dbReference type="SUPFAM" id="SSF50630">
    <property type="entry name" value="Acid proteases"/>
    <property type="match status" value="1"/>
</dbReference>
<dbReference type="PROSITE" id="PS00141">
    <property type="entry name" value="ASP_PROTEASE"/>
    <property type="match status" value="2"/>
</dbReference>
<dbReference type="PROSITE" id="PS51767">
    <property type="entry name" value="PEPTIDASE_A1"/>
    <property type="match status" value="1"/>
</dbReference>
<gene>
    <name evidence="7" type="primary">pepA</name>
</gene>